<evidence type="ECO:0000255" key="1">
    <source>
        <dbReference type="HAMAP-Rule" id="MF_00300"/>
    </source>
</evidence>
<name>AROC_PARDP</name>
<comment type="function">
    <text evidence="1">Catalyzes the anti-1,4-elimination of the C-3 phosphate and the C-6 proR hydrogen from 5-enolpyruvylshikimate-3-phosphate (EPSP) to yield chorismate, which is the branch point compound that serves as the starting substrate for the three terminal pathways of aromatic amino acid biosynthesis. This reaction introduces a second double bond into the aromatic ring system.</text>
</comment>
<comment type="catalytic activity">
    <reaction evidence="1">
        <text>5-O-(1-carboxyvinyl)-3-phosphoshikimate = chorismate + phosphate</text>
        <dbReference type="Rhea" id="RHEA:21020"/>
        <dbReference type="ChEBI" id="CHEBI:29748"/>
        <dbReference type="ChEBI" id="CHEBI:43474"/>
        <dbReference type="ChEBI" id="CHEBI:57701"/>
        <dbReference type="EC" id="4.2.3.5"/>
    </reaction>
</comment>
<comment type="cofactor">
    <cofactor evidence="1">
        <name>FMNH2</name>
        <dbReference type="ChEBI" id="CHEBI:57618"/>
    </cofactor>
    <text evidence="1">Reduced FMN (FMNH(2)).</text>
</comment>
<comment type="pathway">
    <text evidence="1">Metabolic intermediate biosynthesis; chorismate biosynthesis; chorismate from D-erythrose 4-phosphate and phosphoenolpyruvate: step 7/7.</text>
</comment>
<comment type="subunit">
    <text evidence="1">Homotetramer.</text>
</comment>
<comment type="similarity">
    <text evidence="1">Belongs to the chorismate synthase family.</text>
</comment>
<protein>
    <recommendedName>
        <fullName evidence="1">Chorismate synthase</fullName>
        <shortName evidence="1">CS</shortName>
        <ecNumber evidence="1">4.2.3.5</ecNumber>
    </recommendedName>
    <alternativeName>
        <fullName evidence="1">5-enolpyruvylshikimate-3-phosphate phospholyase</fullName>
    </alternativeName>
</protein>
<sequence length="366" mass="38964">MSFNTFGRVFTFTTWGESHGPALGATVDGCPPGVALDEGWIQQFLDRRRPGSSKFTTQRQEPDRVRILSGVFEGRTTGTPIQLMIENTDQRSKDYGEIAQAFRPGHADIAYHLKYGIRDYRGGGRSSARETAARVAAGGVAQAVLRDLVPGLKIAGYMVQMGDLHLDRANFDLAEIGNNPFFLPDAGAVPAWEDYLNAIRKAQDSVGAAVEVLIQGCPPGLGAPVYAKLDTDLAAAMMSINAVKGVEIGEGMAAAALTGTANADEIRMGNEGPRFLSNHAGGILGGISTGQDIVVRFAVKPTSSILTPRRTINRKGEEIELITKGRHDPCVGIRAVPIAEAMAACVVLDHLLLDRAQTGGRRGTIG</sequence>
<organism>
    <name type="scientific">Paracoccus denitrificans (strain Pd 1222)</name>
    <dbReference type="NCBI Taxonomy" id="318586"/>
    <lineage>
        <taxon>Bacteria</taxon>
        <taxon>Pseudomonadati</taxon>
        <taxon>Pseudomonadota</taxon>
        <taxon>Alphaproteobacteria</taxon>
        <taxon>Rhodobacterales</taxon>
        <taxon>Paracoccaceae</taxon>
        <taxon>Paracoccus</taxon>
    </lineage>
</organism>
<reference key="1">
    <citation type="submission" date="2006-12" db="EMBL/GenBank/DDBJ databases">
        <title>Complete sequence of chromosome 2 of Paracoccus denitrificans PD1222.</title>
        <authorList>
            <person name="Copeland A."/>
            <person name="Lucas S."/>
            <person name="Lapidus A."/>
            <person name="Barry K."/>
            <person name="Detter J.C."/>
            <person name="Glavina del Rio T."/>
            <person name="Hammon N."/>
            <person name="Israni S."/>
            <person name="Dalin E."/>
            <person name="Tice H."/>
            <person name="Pitluck S."/>
            <person name="Munk A.C."/>
            <person name="Brettin T."/>
            <person name="Bruce D."/>
            <person name="Han C."/>
            <person name="Tapia R."/>
            <person name="Gilna P."/>
            <person name="Schmutz J."/>
            <person name="Larimer F."/>
            <person name="Land M."/>
            <person name="Hauser L."/>
            <person name="Kyrpides N."/>
            <person name="Lykidis A."/>
            <person name="Spiro S."/>
            <person name="Richardson D.J."/>
            <person name="Moir J.W.B."/>
            <person name="Ferguson S.J."/>
            <person name="van Spanning R.J.M."/>
            <person name="Richardson P."/>
        </authorList>
    </citation>
    <scope>NUCLEOTIDE SEQUENCE [LARGE SCALE GENOMIC DNA]</scope>
    <source>
        <strain>Pd 1222</strain>
    </source>
</reference>
<keyword id="KW-0028">Amino-acid biosynthesis</keyword>
<keyword id="KW-0057">Aromatic amino acid biosynthesis</keyword>
<keyword id="KW-0274">FAD</keyword>
<keyword id="KW-0285">Flavoprotein</keyword>
<keyword id="KW-0288">FMN</keyword>
<keyword id="KW-0456">Lyase</keyword>
<keyword id="KW-0521">NADP</keyword>
<keyword id="KW-1185">Reference proteome</keyword>
<gene>
    <name evidence="1" type="primary">aroC</name>
    <name type="ordered locus">Pden_4332</name>
</gene>
<proteinExistence type="inferred from homology"/>
<accession>A1BA52</accession>
<feature type="chain" id="PRO_0000322419" description="Chorismate synthase">
    <location>
        <begin position="1"/>
        <end position="366"/>
    </location>
</feature>
<feature type="binding site" evidence="1">
    <location>
        <position position="48"/>
    </location>
    <ligand>
        <name>NADP(+)</name>
        <dbReference type="ChEBI" id="CHEBI:58349"/>
    </ligand>
</feature>
<feature type="binding site" evidence="1">
    <location>
        <begin position="125"/>
        <end position="127"/>
    </location>
    <ligand>
        <name>FMN</name>
        <dbReference type="ChEBI" id="CHEBI:58210"/>
    </ligand>
</feature>
<feature type="binding site" evidence="1">
    <location>
        <begin position="241"/>
        <end position="242"/>
    </location>
    <ligand>
        <name>FMN</name>
        <dbReference type="ChEBI" id="CHEBI:58210"/>
    </ligand>
</feature>
<feature type="binding site" evidence="1">
    <location>
        <position position="285"/>
    </location>
    <ligand>
        <name>FMN</name>
        <dbReference type="ChEBI" id="CHEBI:58210"/>
    </ligand>
</feature>
<feature type="binding site" evidence="1">
    <location>
        <begin position="300"/>
        <end position="304"/>
    </location>
    <ligand>
        <name>FMN</name>
        <dbReference type="ChEBI" id="CHEBI:58210"/>
    </ligand>
</feature>
<feature type="binding site" evidence="1">
    <location>
        <position position="326"/>
    </location>
    <ligand>
        <name>FMN</name>
        <dbReference type="ChEBI" id="CHEBI:58210"/>
    </ligand>
</feature>
<dbReference type="EC" id="4.2.3.5" evidence="1"/>
<dbReference type="EMBL" id="CP000490">
    <property type="protein sequence ID" value="ABL72396.1"/>
    <property type="molecule type" value="Genomic_DNA"/>
</dbReference>
<dbReference type="RefSeq" id="WP_011750558.1">
    <property type="nucleotide sequence ID" value="NC_008687.1"/>
</dbReference>
<dbReference type="SMR" id="A1BA52"/>
<dbReference type="STRING" id="318586.Pden_4332"/>
<dbReference type="EnsemblBacteria" id="ABL72396">
    <property type="protein sequence ID" value="ABL72396"/>
    <property type="gene ID" value="Pden_4332"/>
</dbReference>
<dbReference type="GeneID" id="93453997"/>
<dbReference type="KEGG" id="pde:Pden_4332"/>
<dbReference type="eggNOG" id="COG0082">
    <property type="taxonomic scope" value="Bacteria"/>
</dbReference>
<dbReference type="HOGENOM" id="CLU_034547_0_0_5"/>
<dbReference type="OrthoDB" id="9771806at2"/>
<dbReference type="UniPathway" id="UPA00053">
    <property type="reaction ID" value="UER00090"/>
</dbReference>
<dbReference type="Proteomes" id="UP000000361">
    <property type="component" value="Chromosome 2"/>
</dbReference>
<dbReference type="GO" id="GO:0005829">
    <property type="term" value="C:cytosol"/>
    <property type="evidence" value="ECO:0007669"/>
    <property type="project" value="TreeGrafter"/>
</dbReference>
<dbReference type="GO" id="GO:0004107">
    <property type="term" value="F:chorismate synthase activity"/>
    <property type="evidence" value="ECO:0007669"/>
    <property type="project" value="UniProtKB-UniRule"/>
</dbReference>
<dbReference type="GO" id="GO:0010181">
    <property type="term" value="F:FMN binding"/>
    <property type="evidence" value="ECO:0007669"/>
    <property type="project" value="TreeGrafter"/>
</dbReference>
<dbReference type="GO" id="GO:0008652">
    <property type="term" value="P:amino acid biosynthetic process"/>
    <property type="evidence" value="ECO:0007669"/>
    <property type="project" value="UniProtKB-KW"/>
</dbReference>
<dbReference type="GO" id="GO:0009073">
    <property type="term" value="P:aromatic amino acid family biosynthetic process"/>
    <property type="evidence" value="ECO:0007669"/>
    <property type="project" value="UniProtKB-KW"/>
</dbReference>
<dbReference type="GO" id="GO:0009423">
    <property type="term" value="P:chorismate biosynthetic process"/>
    <property type="evidence" value="ECO:0007669"/>
    <property type="project" value="UniProtKB-UniRule"/>
</dbReference>
<dbReference type="CDD" id="cd07304">
    <property type="entry name" value="Chorismate_synthase"/>
    <property type="match status" value="1"/>
</dbReference>
<dbReference type="Gene3D" id="3.60.150.10">
    <property type="entry name" value="Chorismate synthase AroC"/>
    <property type="match status" value="1"/>
</dbReference>
<dbReference type="HAMAP" id="MF_00300">
    <property type="entry name" value="Chorismate_synth"/>
    <property type="match status" value="1"/>
</dbReference>
<dbReference type="InterPro" id="IPR000453">
    <property type="entry name" value="Chorismate_synth"/>
</dbReference>
<dbReference type="InterPro" id="IPR035904">
    <property type="entry name" value="Chorismate_synth_AroC_sf"/>
</dbReference>
<dbReference type="InterPro" id="IPR020541">
    <property type="entry name" value="Chorismate_synthase_CS"/>
</dbReference>
<dbReference type="NCBIfam" id="TIGR00033">
    <property type="entry name" value="aroC"/>
    <property type="match status" value="1"/>
</dbReference>
<dbReference type="NCBIfam" id="NF003793">
    <property type="entry name" value="PRK05382.1"/>
    <property type="match status" value="1"/>
</dbReference>
<dbReference type="PANTHER" id="PTHR21085">
    <property type="entry name" value="CHORISMATE SYNTHASE"/>
    <property type="match status" value="1"/>
</dbReference>
<dbReference type="PANTHER" id="PTHR21085:SF0">
    <property type="entry name" value="CHORISMATE SYNTHASE"/>
    <property type="match status" value="1"/>
</dbReference>
<dbReference type="Pfam" id="PF01264">
    <property type="entry name" value="Chorismate_synt"/>
    <property type="match status" value="1"/>
</dbReference>
<dbReference type="PIRSF" id="PIRSF001456">
    <property type="entry name" value="Chorismate_synth"/>
    <property type="match status" value="1"/>
</dbReference>
<dbReference type="SUPFAM" id="SSF103263">
    <property type="entry name" value="Chorismate synthase, AroC"/>
    <property type="match status" value="1"/>
</dbReference>
<dbReference type="PROSITE" id="PS00787">
    <property type="entry name" value="CHORISMATE_SYNTHASE_1"/>
    <property type="match status" value="1"/>
</dbReference>
<dbReference type="PROSITE" id="PS00789">
    <property type="entry name" value="CHORISMATE_SYNTHASE_3"/>
    <property type="match status" value="1"/>
</dbReference>